<evidence type="ECO:0000255" key="1">
    <source>
        <dbReference type="HAMAP-Rule" id="MF_01599"/>
    </source>
</evidence>
<reference key="1">
    <citation type="journal article" date="2011" name="J. Bacteriol.">
        <title>Comparative genomics of 28 Salmonella enterica isolates: evidence for CRISPR-mediated adaptive sublineage evolution.</title>
        <authorList>
            <person name="Fricke W.F."/>
            <person name="Mammel M.K."/>
            <person name="McDermott P.F."/>
            <person name="Tartera C."/>
            <person name="White D.G."/>
            <person name="Leclerc J.E."/>
            <person name="Ravel J."/>
            <person name="Cebula T.A."/>
        </authorList>
    </citation>
    <scope>NUCLEOTIDE SEQUENCE [LARGE SCALE GENOMIC DNA]</scope>
    <source>
        <strain>SL476</strain>
    </source>
</reference>
<proteinExistence type="inferred from homology"/>
<feature type="chain" id="PRO_1000191541" description="Na(+)/H(+) antiporter NhaB">
    <location>
        <begin position="1"/>
        <end position="514"/>
    </location>
</feature>
<feature type="transmembrane region" description="Helical" evidence="1">
    <location>
        <begin position="23"/>
        <end position="43"/>
    </location>
</feature>
<feature type="transmembrane region" description="Helical" evidence="1">
    <location>
        <begin position="63"/>
        <end position="83"/>
    </location>
</feature>
<feature type="transmembrane region" description="Helical" evidence="1">
    <location>
        <begin position="97"/>
        <end position="117"/>
    </location>
</feature>
<feature type="transmembrane region" description="Helical" evidence="1">
    <location>
        <begin position="120"/>
        <end position="140"/>
    </location>
</feature>
<feature type="transmembrane region" description="Helical" evidence="1">
    <location>
        <begin position="144"/>
        <end position="164"/>
    </location>
</feature>
<feature type="transmembrane region" description="Helical" evidence="1">
    <location>
        <begin position="202"/>
        <end position="222"/>
    </location>
</feature>
<feature type="transmembrane region" description="Helical" evidence="1">
    <location>
        <begin position="238"/>
        <end position="258"/>
    </location>
</feature>
<feature type="transmembrane region" description="Helical" evidence="1">
    <location>
        <begin position="303"/>
        <end position="323"/>
    </location>
</feature>
<feature type="transmembrane region" description="Helical" evidence="1">
    <location>
        <begin position="357"/>
        <end position="377"/>
    </location>
</feature>
<feature type="transmembrane region" description="Helical" evidence="1">
    <location>
        <begin position="391"/>
        <end position="411"/>
    </location>
</feature>
<feature type="transmembrane region" description="Helical" evidence="1">
    <location>
        <begin position="447"/>
        <end position="467"/>
    </location>
</feature>
<feature type="transmembrane region" description="Helical" evidence="1">
    <location>
        <begin position="475"/>
        <end position="495"/>
    </location>
</feature>
<sequence>MEISWGRAMWRNFLGQSPDWYKLALLVFLIVNPFIFLANPFIAGWLLVAEFIFTLAMALKCYPLLPGGLLAIEAVIIGMTSAAHVREEVAANLEVLLLLMFMVAGIYFMKQLLLFIFTRLLLSIRSKMVLSLAFCVAAAFLSAFLDALTVVAVVISVAVGFYGIYHRVASSRGEENDMLDDSHIDPHYKTVLEQFRGFLRSLMMHAGVGTALGGVMTMVGEPQNLIIAKAAGWHFGDFFLRMSPVTVPVLVCGLLTCMLVEKMRWFGYGETLPEKVRDVLQQFDDQSRKKRTRQDKIKLIVQAIIGVWLVTALALHLAEVGLIGLSVIILATALTGVTDEHAIGKAFTESLPFTALLTVFFSIVAVIIDQHLFAPIIQFVLQASEHAQLTLFYLFNGLLSSISDNVFVGTIYINEAKAAMENGAISLKQFELLAVAINTGTNLPSVATPNGQAAFLFLLTSALAPLIRLSYGRMVWMALPYTIVLTLIGLLCVEFTLAPATEWMTQAGWLATLS</sequence>
<organism>
    <name type="scientific">Salmonella heidelberg (strain SL476)</name>
    <dbReference type="NCBI Taxonomy" id="454169"/>
    <lineage>
        <taxon>Bacteria</taxon>
        <taxon>Pseudomonadati</taxon>
        <taxon>Pseudomonadota</taxon>
        <taxon>Gammaproteobacteria</taxon>
        <taxon>Enterobacterales</taxon>
        <taxon>Enterobacteriaceae</taxon>
        <taxon>Salmonella</taxon>
    </lineage>
</organism>
<protein>
    <recommendedName>
        <fullName evidence="1">Na(+)/H(+) antiporter NhaB</fullName>
    </recommendedName>
    <alternativeName>
        <fullName evidence="1">Sodium/proton antiporter NhaB</fullName>
    </alternativeName>
</protein>
<keyword id="KW-0050">Antiport</keyword>
<keyword id="KW-0997">Cell inner membrane</keyword>
<keyword id="KW-1003">Cell membrane</keyword>
<keyword id="KW-0406">Ion transport</keyword>
<keyword id="KW-0472">Membrane</keyword>
<keyword id="KW-0915">Sodium</keyword>
<keyword id="KW-0739">Sodium transport</keyword>
<keyword id="KW-0812">Transmembrane</keyword>
<keyword id="KW-1133">Transmembrane helix</keyword>
<keyword id="KW-0813">Transport</keyword>
<accession>B4TKD6</accession>
<dbReference type="EMBL" id="CP001120">
    <property type="protein sequence ID" value="ACF66224.1"/>
    <property type="molecule type" value="Genomic_DNA"/>
</dbReference>
<dbReference type="RefSeq" id="WP_000406435.1">
    <property type="nucleotide sequence ID" value="NC_011083.1"/>
</dbReference>
<dbReference type="SMR" id="B4TKD6"/>
<dbReference type="KEGG" id="seh:SeHA_C2004"/>
<dbReference type="HOGENOM" id="CLU_041110_0_0_6"/>
<dbReference type="Proteomes" id="UP000001866">
    <property type="component" value="Chromosome"/>
</dbReference>
<dbReference type="GO" id="GO:0005886">
    <property type="term" value="C:plasma membrane"/>
    <property type="evidence" value="ECO:0007669"/>
    <property type="project" value="UniProtKB-SubCell"/>
</dbReference>
<dbReference type="GO" id="GO:0015385">
    <property type="term" value="F:sodium:proton antiporter activity"/>
    <property type="evidence" value="ECO:0007669"/>
    <property type="project" value="InterPro"/>
</dbReference>
<dbReference type="HAMAP" id="MF_01599">
    <property type="entry name" value="NhaB"/>
    <property type="match status" value="1"/>
</dbReference>
<dbReference type="InterPro" id="IPR004671">
    <property type="entry name" value="Na+/H+_antiporter_NhaB"/>
</dbReference>
<dbReference type="NCBIfam" id="TIGR00774">
    <property type="entry name" value="NhaB"/>
    <property type="match status" value="1"/>
</dbReference>
<dbReference type="NCBIfam" id="NF007093">
    <property type="entry name" value="PRK09547.1"/>
    <property type="match status" value="1"/>
</dbReference>
<dbReference type="PANTHER" id="PTHR43302:SF1">
    <property type="entry name" value="NA(+)_H(+) ANTIPORTER NHAB"/>
    <property type="match status" value="1"/>
</dbReference>
<dbReference type="PANTHER" id="PTHR43302">
    <property type="entry name" value="TRANSPORTER ARSB-RELATED"/>
    <property type="match status" value="1"/>
</dbReference>
<dbReference type="Pfam" id="PF06450">
    <property type="entry name" value="NhaB"/>
    <property type="match status" value="1"/>
</dbReference>
<comment type="function">
    <text evidence="1">Na(+)/H(+) antiporter that extrudes sodium in exchange for external protons.</text>
</comment>
<comment type="catalytic activity">
    <reaction evidence="1">
        <text>2 Na(+)(in) + 3 H(+)(out) = 2 Na(+)(out) + 3 H(+)(in)</text>
        <dbReference type="Rhea" id="RHEA:29247"/>
        <dbReference type="ChEBI" id="CHEBI:15378"/>
        <dbReference type="ChEBI" id="CHEBI:29101"/>
    </reaction>
    <physiologicalReaction direction="left-to-right" evidence="1">
        <dbReference type="Rhea" id="RHEA:29248"/>
    </physiologicalReaction>
</comment>
<comment type="subcellular location">
    <subcellularLocation>
        <location evidence="1">Cell inner membrane</location>
        <topology evidence="1">Multi-pass membrane protein</topology>
    </subcellularLocation>
</comment>
<comment type="similarity">
    <text evidence="1">Belongs to the NhaB Na(+)/H(+) (TC 2.A.34) antiporter family.</text>
</comment>
<name>NHAB_SALHS</name>
<gene>
    <name evidence="1" type="primary">nhaB</name>
    <name type="ordered locus">SeHA_C2004</name>
</gene>